<protein>
    <recommendedName>
        <fullName evidence="1">Apolipoprotein N-acyltransferase</fullName>
        <shortName evidence="1">ALP N-acyltransferase</shortName>
        <ecNumber evidence="1">2.3.1.269</ecNumber>
    </recommendedName>
</protein>
<keyword id="KW-0012">Acyltransferase</keyword>
<keyword id="KW-0997">Cell inner membrane</keyword>
<keyword id="KW-1003">Cell membrane</keyword>
<keyword id="KW-0472">Membrane</keyword>
<keyword id="KW-1185">Reference proteome</keyword>
<keyword id="KW-0808">Transferase</keyword>
<keyword id="KW-0812">Transmembrane</keyword>
<keyword id="KW-1133">Transmembrane helix</keyword>
<organism>
    <name type="scientific">Neisseria meningitidis serogroup B (strain ATCC BAA-335 / MC58)</name>
    <dbReference type="NCBI Taxonomy" id="122586"/>
    <lineage>
        <taxon>Bacteria</taxon>
        <taxon>Pseudomonadati</taxon>
        <taxon>Pseudomonadota</taxon>
        <taxon>Betaproteobacteria</taxon>
        <taxon>Neisseriales</taxon>
        <taxon>Neisseriaceae</taxon>
        <taxon>Neisseria</taxon>
    </lineage>
</organism>
<name>LNT_NEIMB</name>
<evidence type="ECO:0000255" key="1">
    <source>
        <dbReference type="HAMAP-Rule" id="MF_01148"/>
    </source>
</evidence>
<evidence type="ECO:0000305" key="2"/>
<comment type="function">
    <text evidence="1">Catalyzes the phospholipid dependent N-acylation of the N-terminal cysteine of apolipoprotein, the last step in lipoprotein maturation.</text>
</comment>
<comment type="catalytic activity">
    <reaction evidence="1">
        <text>N-terminal S-1,2-diacyl-sn-glyceryl-L-cysteinyl-[lipoprotein] + a glycerophospholipid = N-acyl-S-1,2-diacyl-sn-glyceryl-L-cysteinyl-[lipoprotein] + a 2-acyl-sn-glycero-3-phospholipid + H(+)</text>
        <dbReference type="Rhea" id="RHEA:48228"/>
        <dbReference type="Rhea" id="RHEA-COMP:14681"/>
        <dbReference type="Rhea" id="RHEA-COMP:14684"/>
        <dbReference type="ChEBI" id="CHEBI:15378"/>
        <dbReference type="ChEBI" id="CHEBI:136912"/>
        <dbReference type="ChEBI" id="CHEBI:140656"/>
        <dbReference type="ChEBI" id="CHEBI:140657"/>
        <dbReference type="ChEBI" id="CHEBI:140660"/>
        <dbReference type="EC" id="2.3.1.269"/>
    </reaction>
</comment>
<comment type="pathway">
    <text evidence="1">Protein modification; lipoprotein biosynthesis (N-acyl transfer).</text>
</comment>
<comment type="subcellular location">
    <subcellularLocation>
        <location evidence="1">Cell inner membrane</location>
        <topology evidence="1">Multi-pass membrane protein</topology>
    </subcellularLocation>
</comment>
<comment type="similarity">
    <text evidence="1">Belongs to the CN hydrolase family. Apolipoprotein N-acyltransferase subfamily.</text>
</comment>
<comment type="sequence caution" evidence="2">
    <conflict type="erroneous initiation">
        <sequence resource="EMBL-CDS" id="AAF41128"/>
    </conflict>
</comment>
<feature type="chain" id="PRO_0000178077" description="Apolipoprotein N-acyltransferase">
    <location>
        <begin position="1"/>
        <end position="512"/>
    </location>
</feature>
<feature type="transmembrane region" description="Helical" evidence="1">
    <location>
        <begin position="5"/>
        <end position="25"/>
    </location>
</feature>
<feature type="transmembrane region" description="Helical" evidence="1">
    <location>
        <begin position="56"/>
        <end position="76"/>
    </location>
</feature>
<feature type="transmembrane region" description="Helical" evidence="1">
    <location>
        <begin position="92"/>
        <end position="112"/>
    </location>
</feature>
<feature type="transmembrane region" description="Helical" evidence="1">
    <location>
        <begin position="118"/>
        <end position="138"/>
    </location>
</feature>
<feature type="transmembrane region" description="Helical" evidence="1">
    <location>
        <begin position="168"/>
        <end position="188"/>
    </location>
</feature>
<feature type="transmembrane region" description="Helical" evidence="1">
    <location>
        <begin position="195"/>
        <end position="215"/>
    </location>
</feature>
<feature type="transmembrane region" description="Helical" evidence="1">
    <location>
        <begin position="487"/>
        <end position="507"/>
    </location>
</feature>
<feature type="domain" description="CN hydrolase" evidence="1">
    <location>
        <begin position="233"/>
        <end position="477"/>
    </location>
</feature>
<feature type="active site" description="Proton acceptor" evidence="1">
    <location>
        <position position="271"/>
    </location>
</feature>
<feature type="active site" evidence="1">
    <location>
        <position position="337"/>
    </location>
</feature>
<feature type="active site" description="Nucleophile" evidence="1">
    <location>
        <position position="389"/>
    </location>
</feature>
<gene>
    <name evidence="1" type="primary">lnt</name>
    <name type="ordered locus">NMB0713</name>
</gene>
<accession>Q9K0A2</accession>
<proteinExistence type="inferred from homology"/>
<reference key="1">
    <citation type="journal article" date="2000" name="Science">
        <title>Complete genome sequence of Neisseria meningitidis serogroup B strain MC58.</title>
        <authorList>
            <person name="Tettelin H."/>
            <person name="Saunders N.J."/>
            <person name="Heidelberg J.F."/>
            <person name="Jeffries A.C."/>
            <person name="Nelson K.E."/>
            <person name="Eisen J.A."/>
            <person name="Ketchum K.A."/>
            <person name="Hood D.W."/>
            <person name="Peden J.F."/>
            <person name="Dodson R.J."/>
            <person name="Nelson W.C."/>
            <person name="Gwinn M.L."/>
            <person name="DeBoy R.T."/>
            <person name="Peterson J.D."/>
            <person name="Hickey E.K."/>
            <person name="Haft D.H."/>
            <person name="Salzberg S.L."/>
            <person name="White O."/>
            <person name="Fleischmann R.D."/>
            <person name="Dougherty B.A."/>
            <person name="Mason T.M."/>
            <person name="Ciecko A."/>
            <person name="Parksey D.S."/>
            <person name="Blair E."/>
            <person name="Cittone H."/>
            <person name="Clark E.B."/>
            <person name="Cotton M.D."/>
            <person name="Utterback T.R."/>
            <person name="Khouri H.M."/>
            <person name="Qin H."/>
            <person name="Vamathevan J.J."/>
            <person name="Gill J."/>
            <person name="Scarlato V."/>
            <person name="Masignani V."/>
            <person name="Pizza M."/>
            <person name="Grandi G."/>
            <person name="Sun L."/>
            <person name="Smith H.O."/>
            <person name="Fraser C.M."/>
            <person name="Moxon E.R."/>
            <person name="Rappuoli R."/>
            <person name="Venter J.C."/>
        </authorList>
    </citation>
    <scope>NUCLEOTIDE SEQUENCE [LARGE SCALE GENOMIC DNA]</scope>
    <source>
        <strain>ATCC BAA-335 / MC58</strain>
    </source>
</reference>
<dbReference type="EC" id="2.3.1.269" evidence="1"/>
<dbReference type="EMBL" id="AE002098">
    <property type="protein sequence ID" value="AAF41128.1"/>
    <property type="status" value="ALT_INIT"/>
    <property type="molecule type" value="Genomic_DNA"/>
</dbReference>
<dbReference type="PIR" id="H81166">
    <property type="entry name" value="H81166"/>
</dbReference>
<dbReference type="RefSeq" id="NP_273755.1">
    <property type="nucleotide sequence ID" value="NC_003112.2"/>
</dbReference>
<dbReference type="RefSeq" id="WP_002244059.1">
    <property type="nucleotide sequence ID" value="NC_003112.2"/>
</dbReference>
<dbReference type="SMR" id="Q9K0A2"/>
<dbReference type="FunCoup" id="Q9K0A2">
    <property type="interactions" value="260"/>
</dbReference>
<dbReference type="STRING" id="122586.NMB0713"/>
<dbReference type="PaxDb" id="122586-NMB0713"/>
<dbReference type="DNASU" id="902825"/>
<dbReference type="KEGG" id="nme:NMB0713"/>
<dbReference type="PATRIC" id="fig|122586.8.peg.909"/>
<dbReference type="HOGENOM" id="CLU_019563_3_0_4"/>
<dbReference type="InParanoid" id="Q9K0A2"/>
<dbReference type="OrthoDB" id="9804277at2"/>
<dbReference type="UniPathway" id="UPA00666"/>
<dbReference type="Proteomes" id="UP000000425">
    <property type="component" value="Chromosome"/>
</dbReference>
<dbReference type="GO" id="GO:0005886">
    <property type="term" value="C:plasma membrane"/>
    <property type="evidence" value="ECO:0007669"/>
    <property type="project" value="UniProtKB-SubCell"/>
</dbReference>
<dbReference type="GO" id="GO:0016410">
    <property type="term" value="F:N-acyltransferase activity"/>
    <property type="evidence" value="ECO:0007669"/>
    <property type="project" value="UniProtKB-UniRule"/>
</dbReference>
<dbReference type="GO" id="GO:0042158">
    <property type="term" value="P:lipoprotein biosynthetic process"/>
    <property type="evidence" value="ECO:0007669"/>
    <property type="project" value="UniProtKB-UniRule"/>
</dbReference>
<dbReference type="CDD" id="cd07571">
    <property type="entry name" value="ALP_N-acyl_transferase"/>
    <property type="match status" value="1"/>
</dbReference>
<dbReference type="Gene3D" id="3.60.110.10">
    <property type="entry name" value="Carbon-nitrogen hydrolase"/>
    <property type="match status" value="1"/>
</dbReference>
<dbReference type="HAMAP" id="MF_01148">
    <property type="entry name" value="Lnt"/>
    <property type="match status" value="1"/>
</dbReference>
<dbReference type="InterPro" id="IPR004563">
    <property type="entry name" value="Apolipo_AcylTrfase"/>
</dbReference>
<dbReference type="InterPro" id="IPR003010">
    <property type="entry name" value="C-N_Hydrolase"/>
</dbReference>
<dbReference type="InterPro" id="IPR036526">
    <property type="entry name" value="C-N_Hydrolase_sf"/>
</dbReference>
<dbReference type="InterPro" id="IPR045378">
    <property type="entry name" value="LNT_N"/>
</dbReference>
<dbReference type="NCBIfam" id="TIGR00546">
    <property type="entry name" value="lnt"/>
    <property type="match status" value="1"/>
</dbReference>
<dbReference type="PANTHER" id="PTHR38686">
    <property type="entry name" value="APOLIPOPROTEIN N-ACYLTRANSFERASE"/>
    <property type="match status" value="1"/>
</dbReference>
<dbReference type="PANTHER" id="PTHR38686:SF1">
    <property type="entry name" value="APOLIPOPROTEIN N-ACYLTRANSFERASE"/>
    <property type="match status" value="1"/>
</dbReference>
<dbReference type="Pfam" id="PF00795">
    <property type="entry name" value="CN_hydrolase"/>
    <property type="match status" value="1"/>
</dbReference>
<dbReference type="Pfam" id="PF20154">
    <property type="entry name" value="LNT_N"/>
    <property type="match status" value="1"/>
</dbReference>
<dbReference type="SUPFAM" id="SSF56317">
    <property type="entry name" value="Carbon-nitrogen hydrolase"/>
    <property type="match status" value="1"/>
</dbReference>
<dbReference type="PROSITE" id="PS50263">
    <property type="entry name" value="CN_HYDROLASE"/>
    <property type="match status" value="1"/>
</dbReference>
<sequence>MVSKLDKYWQHPALYWPLLILFAAATPFTFAPYYHFWLMPLIFGAFVRLIELRPRFAVSSAYLFGLTAYTTQFYWIHTALHDVSGLPDLYAVPLTFLLPAYLALYPALCFWLWKKFTLPRGIKIGLVLPILWTLTEFARERFLTGFGWGAIGYSQITPDSPLAGFAPLGGIHMVTLATAFLGVWLVLASNNTARSGKRLLPIILIAALLAAGYTARQTDFTRPDGSRSTVALLQGNIDQTLKWREDQVIPTIQKYYEQVGKTTADIVILPETAIPVMRQNLPENILAKFAEQAQNNGSALAVGISQYTSDGNGYENAVINLTGYQENNQDGIPYYAKNHLVPFGEYKPLPFLTTPLYKMMDMPLSDFRKGGGKQSALLMKNQKIAFNICYEDGFGDELIAAAKDATLLANASNMAWYGKSNAMYQHLQQSQARAMELGRYMVRATNTGATAIISPKGNIIAQAQPDTETVLEGHIKGYVGETPYMKTGSSWWLMGILALAALILFIFRNKEH</sequence>